<comment type="function">
    <text evidence="1 3 4 5">Dual-function toxin that acts both as an insecticidal and an antimicrobial peptide (PubMed:19966481, PubMed:30393903, PubMed:35490851). May inhibit voltage-gated potassium channels (Kv) (By similarity). This amphipathic peptide causes significant antimicrobial activity against E.coli (MIC=7 uM) but does not show any activity against S.aureus even at high concentration (PubMed:19966481, PubMed:30393903, PubMed:35490851). In vivo, causes paralysis or death to crickets (PubMed:19966481, PubMed:30393903, PubMed:35490851).</text>
</comment>
<comment type="subcellular location">
    <subcellularLocation>
        <location evidence="3">Secreted</location>
    </subcellularLocation>
</comment>
<comment type="tissue specificity">
    <text evidence="9">Expressed by the venom gland.</text>
</comment>
<comment type="domain">
    <text evidence="8">Contains 2 domains: a N-terminal domain that is unstructured or forms an alpha-helix in presence of membranes and a CS-alpha/beta C-terminal domain, which consists of an alpha-helix disulfide-linked to antiparallel beta-sheets.</text>
</comment>
<comment type="domain">
    <text evidence="4">The synthetic N-terminal domain (AA 22-51) induces paralysis in crickets within 15 minutes (EC(50)=11 nmol/g) and is not lethal even after 48 hours. It also shows significant antibacterial activity against E.coli but does not show any activity against S.aureus even at high doses.</text>
</comment>
<comment type="domain">
    <text evidence="4">The synthetic C-terminal domain (AA 52-80) does not induce paralysis or lethality in crickets within 15 minutes or 48 hours, even when tested at high doses, nor does it show antibacterial activity against E.coli and S.aureus.</text>
</comment>
<comment type="mass spectrometry" mass="6628.2" method="Electrospray" evidence="3">
    <text>Monoisotopic mass.</text>
</comment>
<comment type="toxic dose">
    <text evidence="4">PD(50) is 4.0 nmol/g in crickets within 15 minutes. LD(50) is 40 nmol/g in crickets within 48 hours.</text>
</comment>
<comment type="similarity">
    <text evidence="8">Belongs to the long chain scorpion toxin family. Class 2 subfamily.</text>
</comment>
<sequence length="80" mass="8984">MAKHLIVMFLVIMVISSLVDCAKKPFVQRVKNAASKAYNKLKGLAMQSQYGCPIISNMCEDHCRRKKMEGQCDLLDCVCS</sequence>
<keyword id="KW-0002">3D-structure</keyword>
<keyword id="KW-0044">Antibiotic</keyword>
<keyword id="KW-0929">Antimicrobial</keyword>
<keyword id="KW-0903">Direct protein sequencing</keyword>
<keyword id="KW-1015">Disulfide bond</keyword>
<keyword id="KW-0528">Neurotoxin</keyword>
<keyword id="KW-0964">Secreted</keyword>
<keyword id="KW-0732">Signal</keyword>
<keyword id="KW-0800">Toxin</keyword>
<reference key="1">
    <citation type="journal article" date="2009" name="Biosci. Biotechnol. Biochem.">
        <title>Purification and cDNA cloning of LaIT2, a novel insecticidal toxin from venom of the scorpion Liocheles australasiae.</title>
        <authorList>
            <person name="Matsushita N."/>
            <person name="Miyashita M."/>
            <person name="Ichiki Y."/>
            <person name="Ogura T."/>
            <person name="Sakuradani E."/>
            <person name="Nakagawa Y."/>
            <person name="Shimizu S."/>
            <person name="Miyagawa H."/>
        </authorList>
    </citation>
    <scope>NUCLEOTIDE SEQUENCE [MRNA]</scope>
    <scope>PROTEIN SEQUENCE OF 22-63</scope>
    <scope>FUNCTION</scope>
    <scope>MASS SPECTROMETRY</scope>
    <scope>SUBCELLULAR LOCATION</scope>
    <source>
        <tissue>Venom</tissue>
        <tissue>Venom gland</tissue>
    </source>
</reference>
<reference key="2">
    <citation type="journal article" date="2018" name="J. Pept. Sci.">
        <title>Chemical synthesis of a two-domain scorpion toxin LaIT2 and its single-domain analogs to elucidate structural factors important for insecticidal and antimicrobial activities.</title>
        <authorList>
            <person name="Juichi H."/>
            <person name="Ando R."/>
            <person name="Ishido T."/>
            <person name="Miyashita M."/>
            <person name="Nakagawa Y."/>
            <person name="Miyagawa H."/>
        </authorList>
    </citation>
    <scope>FUNCTION</scope>
    <scope>SYNTHESIS OF 22-51; 22-80 AND 52-80</scope>
    <scope>DISULFIDE BONDS</scope>
    <scope>TOXIC DOSE</scope>
</reference>
<reference evidence="10" key="3">
    <citation type="journal article" date="2022" name="Toxicon">
        <title>Structural and functional studies of LaIT2, an antimicrobial and insecticidal peptide from Liocheles australasiae.</title>
        <authorList>
            <person name="Tamura M."/>
            <person name="Tatsushiro C."/>
            <person name="Morita E.H."/>
            <person name="Ohki S."/>
        </authorList>
    </citation>
    <scope>STRUCTURE BY NMR OF 22-80</scope>
    <scope>FUNCTION</scope>
    <scope>DISULFIDE BONDS</scope>
    <scope>MUTAGENESIS OF LYS-36; LYS-42 AND 74-LEU-LEU-75</scope>
</reference>
<proteinExistence type="evidence at protein level"/>
<dbReference type="EMBL" id="AB510468">
    <property type="protein sequence ID" value="BAI22852.1"/>
    <property type="molecule type" value="mRNA"/>
</dbReference>
<dbReference type="PDB" id="7WKF">
    <property type="method" value="NMR"/>
    <property type="chains" value="A=22-80"/>
</dbReference>
<dbReference type="PDBsum" id="7WKF"/>
<dbReference type="SMR" id="C7G3K3"/>
<dbReference type="GO" id="GO:0005576">
    <property type="term" value="C:extracellular region"/>
    <property type="evidence" value="ECO:0007669"/>
    <property type="project" value="UniProtKB-SubCell"/>
</dbReference>
<dbReference type="GO" id="GO:0090729">
    <property type="term" value="F:toxin activity"/>
    <property type="evidence" value="ECO:0007669"/>
    <property type="project" value="UniProtKB-KW"/>
</dbReference>
<dbReference type="GO" id="GO:0042742">
    <property type="term" value="P:defense response to bacterium"/>
    <property type="evidence" value="ECO:0007669"/>
    <property type="project" value="UniProtKB-KW"/>
</dbReference>
<dbReference type="InterPro" id="IPR029237">
    <property type="entry name" value="Long_scorpion_toxin_alpha/beta"/>
</dbReference>
<dbReference type="Pfam" id="PF14866">
    <property type="entry name" value="Scorpion_toxin_alpha-beta"/>
    <property type="match status" value="1"/>
</dbReference>
<dbReference type="PROSITE" id="PS51862">
    <property type="entry name" value="BSPN_CSAB"/>
    <property type="match status" value="1"/>
</dbReference>
<name>KBX2_LIOAU</name>
<protein>
    <recommendedName>
        <fullName evidence="6 7">Peptide LaIT2</fullName>
    </recommendedName>
</protein>
<accession>C7G3K3</accession>
<organism>
    <name type="scientific">Liocheles australasiae</name>
    <name type="common">Dwarf wood scorpion</name>
    <dbReference type="NCBI Taxonomy" id="431266"/>
    <lineage>
        <taxon>Eukaryota</taxon>
        <taxon>Metazoa</taxon>
        <taxon>Ecdysozoa</taxon>
        <taxon>Arthropoda</taxon>
        <taxon>Chelicerata</taxon>
        <taxon>Arachnida</taxon>
        <taxon>Scorpiones</taxon>
        <taxon>Iurida</taxon>
        <taxon>Scorpionoidea</taxon>
        <taxon>Hemiscorpiidae</taxon>
        <taxon>Liocheles</taxon>
    </lineage>
</organism>
<feature type="signal peptide" evidence="3">
    <location>
        <begin position="1"/>
        <end position="21"/>
    </location>
</feature>
<feature type="chain" id="PRO_5000503610" description="Peptide LaIT2">
    <location>
        <begin position="22"/>
        <end position="80"/>
    </location>
</feature>
<feature type="domain" description="BetaSPN-type CS-alpha/beta" evidence="2">
    <location>
        <begin position="49"/>
        <end position="80"/>
    </location>
</feature>
<feature type="site" description="Important for antimicrobial activity, but not for insecticidal activity" evidence="5">
    <location>
        <position position="36"/>
    </location>
</feature>
<feature type="site" description="Important for both antimicrobial and insecticidal activities" evidence="5">
    <location>
        <position position="42"/>
    </location>
</feature>
<feature type="site" description="Important for insecticidal activity, but not for antimicrobial activity" evidence="5">
    <location>
        <begin position="74"/>
        <end position="75"/>
    </location>
</feature>
<feature type="disulfide bond" evidence="4 5 11">
    <location>
        <begin position="52"/>
        <end position="72"/>
    </location>
</feature>
<feature type="disulfide bond" evidence="4 5 11">
    <location>
        <begin position="59"/>
        <end position="77"/>
    </location>
</feature>
<feature type="disulfide bond" evidence="4 5 11">
    <location>
        <begin position="63"/>
        <end position="79"/>
    </location>
</feature>
<feature type="mutagenesis site" description="Important decrease in antibacterial activity against E.coli. No change in insecticidal activity against crickets." evidence="5">
    <original>K</original>
    <variation>A</variation>
    <location>
        <position position="36"/>
    </location>
</feature>
<feature type="mutagenesis site" description="Decrease in antibacterial activity against E.coli. Decrease in insecticidal activity against crickets." evidence="5">
    <original>K</original>
    <variation>A</variation>
    <location>
        <position position="42"/>
    </location>
</feature>
<feature type="mutagenesis site" description="No change in antibacterial activity against E.coli. Decrease in insecticidal activity against crickets." evidence="5">
    <original>LL</original>
    <variation>AA</variation>
    <location>
        <begin position="74"/>
        <end position="75"/>
    </location>
</feature>
<feature type="strand" evidence="12">
    <location>
        <begin position="46"/>
        <end position="50"/>
    </location>
</feature>
<feature type="helix" evidence="12">
    <location>
        <begin position="57"/>
        <end position="65"/>
    </location>
</feature>
<feature type="strand" evidence="12">
    <location>
        <begin position="70"/>
        <end position="73"/>
    </location>
</feature>
<feature type="strand" evidence="12">
    <location>
        <begin position="76"/>
        <end position="79"/>
    </location>
</feature>
<evidence type="ECO:0000250" key="1">
    <source>
        <dbReference type="UniProtKB" id="Q0GY41"/>
    </source>
</evidence>
<evidence type="ECO:0000255" key="2">
    <source>
        <dbReference type="PROSITE-ProRule" id="PRU01209"/>
    </source>
</evidence>
<evidence type="ECO:0000269" key="3">
    <source>
    </source>
</evidence>
<evidence type="ECO:0000269" key="4">
    <source>
    </source>
</evidence>
<evidence type="ECO:0000269" key="5">
    <source>
    </source>
</evidence>
<evidence type="ECO:0000303" key="6">
    <source>
    </source>
</evidence>
<evidence type="ECO:0000303" key="7">
    <source>
    </source>
</evidence>
<evidence type="ECO:0000305" key="8"/>
<evidence type="ECO:0000305" key="9">
    <source>
    </source>
</evidence>
<evidence type="ECO:0000312" key="10">
    <source>
        <dbReference type="PDB" id="7WKF"/>
    </source>
</evidence>
<evidence type="ECO:0007744" key="11">
    <source>
        <dbReference type="PDB" id="7WKF"/>
    </source>
</evidence>
<evidence type="ECO:0007829" key="12">
    <source>
        <dbReference type="PDB" id="7WKF"/>
    </source>
</evidence>